<name>VM2A6_VIPAA</name>
<comment type="function">
    <text evidence="2">Poor inhibitor of platelet aggregation. The disintegrin inhibits the adhesion of cells expressing the RGD-dependent integrin alpha-5/beta-1 (ITGA5/ITGB1) to immobilized fibronectin. Inhibition on alpha-IIb/beta-3 (ITGA2B/ITGB3) is low, and there is no inhibition on alpha-1/beta-1 (ITGA1/ITGB1), alpha-2/beta-1 (ITGA2/ITGB1) and alpha-6/beta-1 (ITGA6/ITGB1).</text>
</comment>
<comment type="subunit">
    <text evidence="2">Homodimer; disulfide-linked.</text>
</comment>
<comment type="subcellular location">
    <subcellularLocation>
        <location evidence="2">Secreted</location>
    </subcellularLocation>
</comment>
<comment type="tissue specificity">
    <text>Expressed by the venom gland.</text>
</comment>
<comment type="mass spectrometry">
    <text>Homodimer.</text>
</comment>
<comment type="miscellaneous">
    <text>The disintegrin belongs to the dimeric disintegrin subfamily.</text>
</comment>
<comment type="similarity">
    <text evidence="3">Belongs to the venom metalloproteinase (M12B) family. P-II subfamily. P-IId sub-subfamily.</text>
</comment>
<sequence>NSANPCCDPVTCKPRRGEHCVSGPCCRNCKFLNAGTICRYARGDDMNDYCTGVTSDCPRNPYKS</sequence>
<dbReference type="SMR" id="P0C6A5"/>
<dbReference type="GO" id="GO:0005576">
    <property type="term" value="C:extracellular region"/>
    <property type="evidence" value="ECO:0007669"/>
    <property type="project" value="UniProtKB-SubCell"/>
</dbReference>
<dbReference type="GO" id="GO:0090729">
    <property type="term" value="F:toxin activity"/>
    <property type="evidence" value="ECO:0007669"/>
    <property type="project" value="UniProtKB-KW"/>
</dbReference>
<dbReference type="Gene3D" id="4.10.70.10">
    <property type="entry name" value="Disintegrin domain"/>
    <property type="match status" value="1"/>
</dbReference>
<dbReference type="InterPro" id="IPR018358">
    <property type="entry name" value="Disintegrin_CS"/>
</dbReference>
<dbReference type="InterPro" id="IPR001762">
    <property type="entry name" value="Disintegrin_dom"/>
</dbReference>
<dbReference type="InterPro" id="IPR036436">
    <property type="entry name" value="Disintegrin_dom_sf"/>
</dbReference>
<dbReference type="PANTHER" id="PTHR11905">
    <property type="entry name" value="ADAM A DISINTEGRIN AND METALLOPROTEASE DOMAIN"/>
    <property type="match status" value="1"/>
</dbReference>
<dbReference type="PANTHER" id="PTHR11905:SF159">
    <property type="entry name" value="ADAM METALLOPROTEASE"/>
    <property type="match status" value="1"/>
</dbReference>
<dbReference type="Pfam" id="PF00200">
    <property type="entry name" value="Disintegrin"/>
    <property type="match status" value="1"/>
</dbReference>
<dbReference type="PRINTS" id="PR00289">
    <property type="entry name" value="DISINTEGRIN"/>
</dbReference>
<dbReference type="SMART" id="SM00050">
    <property type="entry name" value="DISIN"/>
    <property type="match status" value="1"/>
</dbReference>
<dbReference type="SUPFAM" id="SSF57552">
    <property type="entry name" value="Blood coagulation inhibitor (disintegrin)"/>
    <property type="match status" value="1"/>
</dbReference>
<dbReference type="PROSITE" id="PS00427">
    <property type="entry name" value="DISINTEGRIN_1"/>
    <property type="match status" value="1"/>
</dbReference>
<dbReference type="PROSITE" id="PS50214">
    <property type="entry name" value="DISINTEGRIN_2"/>
    <property type="match status" value="1"/>
</dbReference>
<proteinExistence type="evidence at protein level"/>
<keyword id="KW-1217">Cell adhesion impairing toxin</keyword>
<keyword id="KW-0903">Direct protein sequencing</keyword>
<keyword id="KW-1015">Disulfide bond</keyword>
<keyword id="KW-1199">Hemostasis impairing toxin</keyword>
<keyword id="KW-1201">Platelet aggregation inhibiting toxin</keyword>
<keyword id="KW-0964">Secreted</keyword>
<keyword id="KW-0800">Toxin</keyword>
<evidence type="ECO:0000255" key="1">
    <source>
        <dbReference type="PROSITE-ProRule" id="PRU00068"/>
    </source>
</evidence>
<evidence type="ECO:0000269" key="2">
    <source>
    </source>
</evidence>
<evidence type="ECO:0000305" key="3"/>
<accession>P0C6A5</accession>
<reference key="1">
    <citation type="journal article" date="2003" name="Biochem. J.">
        <title>Snake venom disintegrins: novel dimeric disintegrins and structural diversification by disulphide bond engineering.</title>
        <authorList>
            <person name="Calvete J.J."/>
            <person name="Moreno-Murciano M.P."/>
            <person name="Theakston R.D.G."/>
            <person name="Kisiel D.G."/>
            <person name="Marcinkiewicz C."/>
        </authorList>
    </citation>
    <scope>PROTEIN SEQUENCE</scope>
    <scope>FUNCTION</scope>
    <scope>SUBUNIT</scope>
    <scope>SUBCELLULAR LOCATION</scope>
    <scope>MASS SPECTROMETRY</scope>
    <source>
        <tissue>Venom</tissue>
    </source>
</reference>
<feature type="chain" id="PRO_0000319020" description="Disintegrin VA6">
    <location>
        <begin position="1"/>
        <end position="64"/>
    </location>
</feature>
<feature type="domain" description="Disintegrin" evidence="1">
    <location>
        <begin position="1"/>
        <end position="64"/>
    </location>
</feature>
<feature type="short sequence motif" description="Cell attachment site">
    <location>
        <begin position="42"/>
        <end position="44"/>
    </location>
</feature>
<feature type="disulfide bond" evidence="1">
    <location>
        <begin position="6"/>
        <end position="29"/>
    </location>
</feature>
<feature type="disulfide bond" description="Interchain (with C-7)" evidence="1">
    <location>
        <position position="7"/>
    </location>
</feature>
<feature type="disulfide bond" description="Interchain (with C-12)" evidence="1">
    <location>
        <position position="12"/>
    </location>
</feature>
<feature type="disulfide bond" evidence="1">
    <location>
        <begin position="20"/>
        <end position="26"/>
    </location>
</feature>
<feature type="disulfide bond" evidence="1">
    <location>
        <begin position="25"/>
        <end position="50"/>
    </location>
</feature>
<feature type="disulfide bond" evidence="1">
    <location>
        <begin position="38"/>
        <end position="57"/>
    </location>
</feature>
<protein>
    <recommendedName>
        <fullName>Disintegrin VA6</fullName>
    </recommendedName>
</protein>
<organism>
    <name type="scientific">Vipera ammodytes ammodytes</name>
    <name type="common">Western sand viper</name>
    <dbReference type="NCBI Taxonomy" id="8705"/>
    <lineage>
        <taxon>Eukaryota</taxon>
        <taxon>Metazoa</taxon>
        <taxon>Chordata</taxon>
        <taxon>Craniata</taxon>
        <taxon>Vertebrata</taxon>
        <taxon>Euteleostomi</taxon>
        <taxon>Lepidosauria</taxon>
        <taxon>Squamata</taxon>
        <taxon>Bifurcata</taxon>
        <taxon>Unidentata</taxon>
        <taxon>Episquamata</taxon>
        <taxon>Toxicofera</taxon>
        <taxon>Serpentes</taxon>
        <taxon>Colubroidea</taxon>
        <taxon>Viperidae</taxon>
        <taxon>Viperinae</taxon>
        <taxon>Vipera</taxon>
    </lineage>
</organism>